<organism>
    <name type="scientific">Baumannia cicadellinicola subsp. Homalodisca coagulata</name>
    <dbReference type="NCBI Taxonomy" id="374463"/>
    <lineage>
        <taxon>Bacteria</taxon>
        <taxon>Pseudomonadati</taxon>
        <taxon>Pseudomonadota</taxon>
        <taxon>Gammaproteobacteria</taxon>
        <taxon>Candidatus Palibaumannia</taxon>
    </lineage>
</organism>
<evidence type="ECO:0000255" key="1">
    <source>
        <dbReference type="HAMAP-Rule" id="MF_01569"/>
    </source>
</evidence>
<sequence>MRTSQYLLSTIKEIPLDAEVISHQLMLRAGIIRQLASGLYTWLPTGLRILRKVENIVREEMNNIGAIEVSMPIVQPANLWLESGRWGQYGPELLRFTDRSTRQFLLGPTHEEVITDLIRNEVKSYKQLPLNLFQIKTKFRDEVRPRYGVMRSREFIMKDAYSFHTSQQSLQATYDLMYYTYNTIFNRIGLDVRTVQADPGSIGGHLSHEFLALVSNYEDQMLLIDASHKATERNLPSENLQLVDAPGIYTLTELVKLFNLPIEKIAQIIIVHAQQNALYPLVALMVRGDHSINYAQVEKLPQVASPLVFATEDEIRLAIGVGSSSLGPINLPLPLIIDHSVAVMSDFVAGANIDGKYFFGINWERDLSLPEVANLTNQNISVSQPQRLHRTNWIEVGHIFQLGSKYSKVMKATVQGEDGNNMIMTMGCYGIGITRVVAAAIDKYNDKQGLLLPVSIAPFQVAIIPINLHKSLLVQTVAEQLYNQLSIRKIDVLLDDRKERPGVMFADIELIGIPHIIIIGDRNLAVQKIEYKNRSNGEKKLMNLSIIVDWIVAKLNS</sequence>
<accession>Q1LSM8</accession>
<comment type="function">
    <text evidence="1">Catalyzes the attachment of proline to tRNA(Pro) in a two-step reaction: proline is first activated by ATP to form Pro-AMP and then transferred to the acceptor end of tRNA(Pro). As ProRS can inadvertently accommodate and process non-cognate amino acids such as alanine and cysteine, to avoid such errors it has two additional distinct editing activities against alanine. One activity is designated as 'pretransfer' editing and involves the tRNA(Pro)-independent hydrolysis of activated Ala-AMP. The other activity is designated 'posttransfer' editing and involves deacylation of mischarged Ala-tRNA(Pro). The misacylated Cys-tRNA(Pro) is not edited by ProRS.</text>
</comment>
<comment type="catalytic activity">
    <reaction evidence="1">
        <text>tRNA(Pro) + L-proline + ATP = L-prolyl-tRNA(Pro) + AMP + diphosphate</text>
        <dbReference type="Rhea" id="RHEA:14305"/>
        <dbReference type="Rhea" id="RHEA-COMP:9700"/>
        <dbReference type="Rhea" id="RHEA-COMP:9702"/>
        <dbReference type="ChEBI" id="CHEBI:30616"/>
        <dbReference type="ChEBI" id="CHEBI:33019"/>
        <dbReference type="ChEBI" id="CHEBI:60039"/>
        <dbReference type="ChEBI" id="CHEBI:78442"/>
        <dbReference type="ChEBI" id="CHEBI:78532"/>
        <dbReference type="ChEBI" id="CHEBI:456215"/>
        <dbReference type="EC" id="6.1.1.15"/>
    </reaction>
</comment>
<comment type="subunit">
    <text evidence="1">Homodimer.</text>
</comment>
<comment type="subcellular location">
    <subcellularLocation>
        <location evidence="1">Cytoplasm</location>
    </subcellularLocation>
</comment>
<comment type="domain">
    <text evidence="1">Consists of three domains: the N-terminal catalytic domain, the editing domain and the C-terminal anticodon-binding domain.</text>
</comment>
<comment type="similarity">
    <text evidence="1">Belongs to the class-II aminoacyl-tRNA synthetase family. ProS type 1 subfamily.</text>
</comment>
<dbReference type="EC" id="6.1.1.15" evidence="1"/>
<dbReference type="EMBL" id="CP000238">
    <property type="protein sequence ID" value="ABF13821.1"/>
    <property type="molecule type" value="Genomic_DNA"/>
</dbReference>
<dbReference type="RefSeq" id="WP_011520769.1">
    <property type="nucleotide sequence ID" value="NC_007984.1"/>
</dbReference>
<dbReference type="SMR" id="Q1LSM8"/>
<dbReference type="STRING" id="374463.BCI_0609"/>
<dbReference type="KEGG" id="bci:BCI_0609"/>
<dbReference type="HOGENOM" id="CLU_016739_0_0_6"/>
<dbReference type="OrthoDB" id="9809052at2"/>
<dbReference type="Proteomes" id="UP000002427">
    <property type="component" value="Chromosome"/>
</dbReference>
<dbReference type="GO" id="GO:0005829">
    <property type="term" value="C:cytosol"/>
    <property type="evidence" value="ECO:0007669"/>
    <property type="project" value="TreeGrafter"/>
</dbReference>
<dbReference type="GO" id="GO:0002161">
    <property type="term" value="F:aminoacyl-tRNA deacylase activity"/>
    <property type="evidence" value="ECO:0007669"/>
    <property type="project" value="InterPro"/>
</dbReference>
<dbReference type="GO" id="GO:0005524">
    <property type="term" value="F:ATP binding"/>
    <property type="evidence" value="ECO:0007669"/>
    <property type="project" value="UniProtKB-UniRule"/>
</dbReference>
<dbReference type="GO" id="GO:0004827">
    <property type="term" value="F:proline-tRNA ligase activity"/>
    <property type="evidence" value="ECO:0007669"/>
    <property type="project" value="UniProtKB-UniRule"/>
</dbReference>
<dbReference type="GO" id="GO:0006433">
    <property type="term" value="P:prolyl-tRNA aminoacylation"/>
    <property type="evidence" value="ECO:0007669"/>
    <property type="project" value="UniProtKB-UniRule"/>
</dbReference>
<dbReference type="CDD" id="cd04334">
    <property type="entry name" value="ProRS-INS"/>
    <property type="match status" value="1"/>
</dbReference>
<dbReference type="CDD" id="cd00861">
    <property type="entry name" value="ProRS_anticodon_short"/>
    <property type="match status" value="1"/>
</dbReference>
<dbReference type="CDD" id="cd00779">
    <property type="entry name" value="ProRS_core_prok"/>
    <property type="match status" value="1"/>
</dbReference>
<dbReference type="Gene3D" id="3.40.50.800">
    <property type="entry name" value="Anticodon-binding domain"/>
    <property type="match status" value="1"/>
</dbReference>
<dbReference type="Gene3D" id="3.30.930.10">
    <property type="entry name" value="Bira Bifunctional Protein, Domain 2"/>
    <property type="match status" value="2"/>
</dbReference>
<dbReference type="Gene3D" id="3.90.960.10">
    <property type="entry name" value="YbaK/aminoacyl-tRNA synthetase-associated domain"/>
    <property type="match status" value="1"/>
</dbReference>
<dbReference type="HAMAP" id="MF_01569">
    <property type="entry name" value="Pro_tRNA_synth_type1"/>
    <property type="match status" value="1"/>
</dbReference>
<dbReference type="InterPro" id="IPR002314">
    <property type="entry name" value="aa-tRNA-synt_IIb"/>
</dbReference>
<dbReference type="InterPro" id="IPR006195">
    <property type="entry name" value="aa-tRNA-synth_II"/>
</dbReference>
<dbReference type="InterPro" id="IPR045864">
    <property type="entry name" value="aa-tRNA-synth_II/BPL/LPL"/>
</dbReference>
<dbReference type="InterPro" id="IPR004154">
    <property type="entry name" value="Anticodon-bd"/>
</dbReference>
<dbReference type="InterPro" id="IPR036621">
    <property type="entry name" value="Anticodon-bd_dom_sf"/>
</dbReference>
<dbReference type="InterPro" id="IPR002316">
    <property type="entry name" value="Pro-tRNA-ligase_IIa"/>
</dbReference>
<dbReference type="InterPro" id="IPR004500">
    <property type="entry name" value="Pro-tRNA-synth_IIa_bac-type"/>
</dbReference>
<dbReference type="InterPro" id="IPR023717">
    <property type="entry name" value="Pro-tRNA-Synthase_IIa_type1"/>
</dbReference>
<dbReference type="InterPro" id="IPR050062">
    <property type="entry name" value="Pro-tRNA_synthetase"/>
</dbReference>
<dbReference type="InterPro" id="IPR044140">
    <property type="entry name" value="ProRS_anticodon_short"/>
</dbReference>
<dbReference type="InterPro" id="IPR033730">
    <property type="entry name" value="ProRS_core_prok"/>
</dbReference>
<dbReference type="InterPro" id="IPR036754">
    <property type="entry name" value="YbaK/aa-tRNA-synt-asso_dom_sf"/>
</dbReference>
<dbReference type="InterPro" id="IPR007214">
    <property type="entry name" value="YbaK/aa-tRNA-synth-assoc-dom"/>
</dbReference>
<dbReference type="NCBIfam" id="NF006625">
    <property type="entry name" value="PRK09194.1"/>
    <property type="match status" value="1"/>
</dbReference>
<dbReference type="NCBIfam" id="TIGR00409">
    <property type="entry name" value="proS_fam_II"/>
    <property type="match status" value="1"/>
</dbReference>
<dbReference type="PANTHER" id="PTHR42753">
    <property type="entry name" value="MITOCHONDRIAL RIBOSOME PROTEIN L39/PROLYL-TRNA LIGASE FAMILY MEMBER"/>
    <property type="match status" value="1"/>
</dbReference>
<dbReference type="PANTHER" id="PTHR42753:SF2">
    <property type="entry name" value="PROLINE--TRNA LIGASE"/>
    <property type="match status" value="1"/>
</dbReference>
<dbReference type="Pfam" id="PF03129">
    <property type="entry name" value="HGTP_anticodon"/>
    <property type="match status" value="1"/>
</dbReference>
<dbReference type="Pfam" id="PF00587">
    <property type="entry name" value="tRNA-synt_2b"/>
    <property type="match status" value="1"/>
</dbReference>
<dbReference type="Pfam" id="PF04073">
    <property type="entry name" value="tRNA_edit"/>
    <property type="match status" value="1"/>
</dbReference>
<dbReference type="PRINTS" id="PR01046">
    <property type="entry name" value="TRNASYNTHPRO"/>
</dbReference>
<dbReference type="SUPFAM" id="SSF52954">
    <property type="entry name" value="Class II aaRS ABD-related"/>
    <property type="match status" value="1"/>
</dbReference>
<dbReference type="SUPFAM" id="SSF55681">
    <property type="entry name" value="Class II aaRS and biotin synthetases"/>
    <property type="match status" value="1"/>
</dbReference>
<dbReference type="SUPFAM" id="SSF55826">
    <property type="entry name" value="YbaK/ProRS associated domain"/>
    <property type="match status" value="1"/>
</dbReference>
<dbReference type="PROSITE" id="PS50862">
    <property type="entry name" value="AA_TRNA_LIGASE_II"/>
    <property type="match status" value="1"/>
</dbReference>
<name>SYP_BAUCH</name>
<feature type="chain" id="PRO_0000248650" description="Proline--tRNA ligase">
    <location>
        <begin position="1"/>
        <end position="557"/>
    </location>
</feature>
<keyword id="KW-0030">Aminoacyl-tRNA synthetase</keyword>
<keyword id="KW-0067">ATP-binding</keyword>
<keyword id="KW-0963">Cytoplasm</keyword>
<keyword id="KW-0436">Ligase</keyword>
<keyword id="KW-0547">Nucleotide-binding</keyword>
<keyword id="KW-0648">Protein biosynthesis</keyword>
<keyword id="KW-1185">Reference proteome</keyword>
<proteinExistence type="inferred from homology"/>
<gene>
    <name evidence="1" type="primary">proS</name>
    <name type="ordered locus">BCI_0609</name>
</gene>
<reference key="1">
    <citation type="journal article" date="2006" name="PLoS Biol.">
        <title>Metabolic complementarity and genomics of the dual bacterial symbiosis of sharpshooters.</title>
        <authorList>
            <person name="Wu D."/>
            <person name="Daugherty S.C."/>
            <person name="Van Aken S.E."/>
            <person name="Pai G.H."/>
            <person name="Watkins K.L."/>
            <person name="Khouri H."/>
            <person name="Tallon L.J."/>
            <person name="Zaborsky J.M."/>
            <person name="Dunbar H.E."/>
            <person name="Tran P.L."/>
            <person name="Moran N.A."/>
            <person name="Eisen J.A."/>
        </authorList>
    </citation>
    <scope>NUCLEOTIDE SEQUENCE [LARGE SCALE GENOMIC DNA]</scope>
</reference>
<protein>
    <recommendedName>
        <fullName evidence="1">Proline--tRNA ligase</fullName>
        <ecNumber evidence="1">6.1.1.15</ecNumber>
    </recommendedName>
    <alternativeName>
        <fullName evidence="1">Prolyl-tRNA synthetase</fullName>
        <shortName evidence="1">ProRS</shortName>
    </alternativeName>
</protein>